<protein>
    <recommendedName>
        <fullName evidence="1">Protein Tlp homolog</fullName>
    </recommendedName>
</protein>
<feature type="chain" id="PRO_1000196952" description="Protein Tlp homolog">
    <location>
        <begin position="1"/>
        <end position="75"/>
    </location>
</feature>
<feature type="region of interest" description="Disordered" evidence="2">
    <location>
        <begin position="52"/>
        <end position="75"/>
    </location>
</feature>
<gene>
    <name evidence="1" type="primary">tlp</name>
    <name type="ordered locus">CLD_3527</name>
</gene>
<comment type="similarity">
    <text evidence="1">Belongs to the Tlp family.</text>
</comment>
<proteinExistence type="inferred from homology"/>
<sequence>MKNKPDDRRDNVDKIQYNITKTIQNCEFADEIIAKTDDEKTKKTLIEKNERRREALDGMREEIKDEARDKKNGYM</sequence>
<reference key="1">
    <citation type="journal article" date="2007" name="PLoS ONE">
        <title>Analysis of the neurotoxin complex genes in Clostridium botulinum A1-A4 and B1 strains: BoNT/A3, /Ba4 and /B1 clusters are located within plasmids.</title>
        <authorList>
            <person name="Smith T.J."/>
            <person name="Hill K.K."/>
            <person name="Foley B.T."/>
            <person name="Detter J.C."/>
            <person name="Munk A.C."/>
            <person name="Bruce D.C."/>
            <person name="Doggett N.A."/>
            <person name="Smith L.A."/>
            <person name="Marks J.D."/>
            <person name="Xie G."/>
            <person name="Brettin T.S."/>
        </authorList>
    </citation>
    <scope>NUCLEOTIDE SEQUENCE [LARGE SCALE GENOMIC DNA]</scope>
    <source>
        <strain>Okra / Type B1</strain>
    </source>
</reference>
<name>TLP_CLOBK</name>
<organism>
    <name type="scientific">Clostridium botulinum (strain Okra / Type B1)</name>
    <dbReference type="NCBI Taxonomy" id="498213"/>
    <lineage>
        <taxon>Bacteria</taxon>
        <taxon>Bacillati</taxon>
        <taxon>Bacillota</taxon>
        <taxon>Clostridia</taxon>
        <taxon>Eubacteriales</taxon>
        <taxon>Clostridiaceae</taxon>
        <taxon>Clostridium</taxon>
    </lineage>
</organism>
<accession>B1IIA6</accession>
<dbReference type="EMBL" id="CP000939">
    <property type="protein sequence ID" value="ACA46051.1"/>
    <property type="molecule type" value="Genomic_DNA"/>
</dbReference>
<dbReference type="RefSeq" id="WP_003405121.1">
    <property type="nucleotide sequence ID" value="NC_010516.1"/>
</dbReference>
<dbReference type="SMR" id="B1IIA6"/>
<dbReference type="KEGG" id="cbb:CLD_3527"/>
<dbReference type="HOGENOM" id="CLU_178266_1_1_9"/>
<dbReference type="Proteomes" id="UP000008541">
    <property type="component" value="Chromosome"/>
</dbReference>
<dbReference type="HAMAP" id="MF_01506">
    <property type="entry name" value="Tlp"/>
    <property type="match status" value="1"/>
</dbReference>
<dbReference type="InterPro" id="IPR017524">
    <property type="entry name" value="SASP_thioredoxin-like"/>
</dbReference>
<dbReference type="NCBIfam" id="TIGR03090">
    <property type="entry name" value="SASP_tlp"/>
    <property type="match status" value="1"/>
</dbReference>
<dbReference type="Pfam" id="PF19824">
    <property type="entry name" value="Tlp"/>
    <property type="match status" value="1"/>
</dbReference>
<evidence type="ECO:0000255" key="1">
    <source>
        <dbReference type="HAMAP-Rule" id="MF_01506"/>
    </source>
</evidence>
<evidence type="ECO:0000256" key="2">
    <source>
        <dbReference type="SAM" id="MobiDB-lite"/>
    </source>
</evidence>